<proteinExistence type="evidence at protein level"/>
<comment type="function">
    <text evidence="3">Accessory protein involved in autophagy. Acts as a scaffold protein of the ATG1-ATG13 complex for faithful delivery of autophagic vesicles to the vacuole. Involved in the stress-induced phosphorylation of ATG1A for turnover of ATG1-ATG13 complex and proper ATG1-ATG13 complex assembly or activity. Required for selective mitophagy. Required for senescence-induced breakdown of mitochondria-resident proteins and mitochondrial vesicles. Seems not essential for ATG8-mediated autophagy.</text>
</comment>
<comment type="subunit">
    <text evidence="3">Homodimer. Interacts with ATG8E, ATG13A and ATG101. Binds to ATG8E on autophagic vesicles.</text>
</comment>
<comment type="subcellular location">
    <subcellularLocation>
        <location evidence="3">Cytoplasmic vesicle</location>
        <location evidence="3">Autophagosome</location>
    </subcellularLocation>
</comment>
<comment type="disruption phenotype">
    <text evidence="3">Mutant plants are hypersensitive to nitrogen or carbon starvation and show early senescence.</text>
</comment>
<comment type="similarity">
    <text evidence="5">Belongs to the ATG11 family.</text>
</comment>
<reference key="1">
    <citation type="journal article" date="1999" name="Nature">
        <title>Sequence and analysis of chromosome 4 of the plant Arabidopsis thaliana.</title>
        <authorList>
            <person name="Mayer K.F.X."/>
            <person name="Schueller C."/>
            <person name="Wambutt R."/>
            <person name="Murphy G."/>
            <person name="Volckaert G."/>
            <person name="Pohl T."/>
            <person name="Duesterhoeft A."/>
            <person name="Stiekema W."/>
            <person name="Entian K.-D."/>
            <person name="Terryn N."/>
            <person name="Harris B."/>
            <person name="Ansorge W."/>
            <person name="Brandt P."/>
            <person name="Grivell L.A."/>
            <person name="Rieger M."/>
            <person name="Weichselgartner M."/>
            <person name="de Simone V."/>
            <person name="Obermaier B."/>
            <person name="Mache R."/>
            <person name="Mueller M."/>
            <person name="Kreis M."/>
            <person name="Delseny M."/>
            <person name="Puigdomenech P."/>
            <person name="Watson M."/>
            <person name="Schmidtheini T."/>
            <person name="Reichert B."/>
            <person name="Portetelle D."/>
            <person name="Perez-Alonso M."/>
            <person name="Boutry M."/>
            <person name="Bancroft I."/>
            <person name="Vos P."/>
            <person name="Hoheisel J."/>
            <person name="Zimmermann W."/>
            <person name="Wedler H."/>
            <person name="Ridley P."/>
            <person name="Langham S.-A."/>
            <person name="McCullagh B."/>
            <person name="Bilham L."/>
            <person name="Robben J."/>
            <person name="van der Schueren J."/>
            <person name="Grymonprez B."/>
            <person name="Chuang Y.-J."/>
            <person name="Vandenbussche F."/>
            <person name="Braeken M."/>
            <person name="Weltjens I."/>
            <person name="Voet M."/>
            <person name="Bastiaens I."/>
            <person name="Aert R."/>
            <person name="Defoor E."/>
            <person name="Weitzenegger T."/>
            <person name="Bothe G."/>
            <person name="Ramsperger U."/>
            <person name="Hilbert H."/>
            <person name="Braun M."/>
            <person name="Holzer E."/>
            <person name="Brandt A."/>
            <person name="Peters S."/>
            <person name="van Staveren M."/>
            <person name="Dirkse W."/>
            <person name="Mooijman P."/>
            <person name="Klein Lankhorst R."/>
            <person name="Rose M."/>
            <person name="Hauf J."/>
            <person name="Koetter P."/>
            <person name="Berneiser S."/>
            <person name="Hempel S."/>
            <person name="Feldpausch M."/>
            <person name="Lamberth S."/>
            <person name="Van den Daele H."/>
            <person name="De Keyser A."/>
            <person name="Buysshaert C."/>
            <person name="Gielen J."/>
            <person name="Villarroel R."/>
            <person name="De Clercq R."/>
            <person name="van Montagu M."/>
            <person name="Rogers J."/>
            <person name="Cronin A."/>
            <person name="Quail M.A."/>
            <person name="Bray-Allen S."/>
            <person name="Clark L."/>
            <person name="Doggett J."/>
            <person name="Hall S."/>
            <person name="Kay M."/>
            <person name="Lennard N."/>
            <person name="McLay K."/>
            <person name="Mayes R."/>
            <person name="Pettett A."/>
            <person name="Rajandream M.A."/>
            <person name="Lyne M."/>
            <person name="Benes V."/>
            <person name="Rechmann S."/>
            <person name="Borkova D."/>
            <person name="Bloecker H."/>
            <person name="Scharfe M."/>
            <person name="Grimm M."/>
            <person name="Loehnert T.-H."/>
            <person name="Dose S."/>
            <person name="de Haan M."/>
            <person name="Maarse A.C."/>
            <person name="Schaefer M."/>
            <person name="Mueller-Auer S."/>
            <person name="Gabel C."/>
            <person name="Fuchs M."/>
            <person name="Fartmann B."/>
            <person name="Granderath K."/>
            <person name="Dauner D."/>
            <person name="Herzl A."/>
            <person name="Neumann S."/>
            <person name="Argiriou A."/>
            <person name="Vitale D."/>
            <person name="Liguori R."/>
            <person name="Piravandi E."/>
            <person name="Massenet O."/>
            <person name="Quigley F."/>
            <person name="Clabauld G."/>
            <person name="Muendlein A."/>
            <person name="Felber R."/>
            <person name="Schnabl S."/>
            <person name="Hiller R."/>
            <person name="Schmidt W."/>
            <person name="Lecharny A."/>
            <person name="Aubourg S."/>
            <person name="Chefdor F."/>
            <person name="Cooke R."/>
            <person name="Berger C."/>
            <person name="Monfort A."/>
            <person name="Casacuberta E."/>
            <person name="Gibbons T."/>
            <person name="Weber N."/>
            <person name="Vandenbol M."/>
            <person name="Bargues M."/>
            <person name="Terol J."/>
            <person name="Torres A."/>
            <person name="Perez-Perez A."/>
            <person name="Purnelle B."/>
            <person name="Bent E."/>
            <person name="Johnson S."/>
            <person name="Tacon D."/>
            <person name="Jesse T."/>
            <person name="Heijnen L."/>
            <person name="Schwarz S."/>
            <person name="Scholler P."/>
            <person name="Heber S."/>
            <person name="Francs P."/>
            <person name="Bielke C."/>
            <person name="Frishman D."/>
            <person name="Haase D."/>
            <person name="Lemcke K."/>
            <person name="Mewes H.-W."/>
            <person name="Stocker S."/>
            <person name="Zaccaria P."/>
            <person name="Bevan M."/>
            <person name="Wilson R.K."/>
            <person name="de la Bastide M."/>
            <person name="Habermann K."/>
            <person name="Parnell L."/>
            <person name="Dedhia N."/>
            <person name="Gnoj L."/>
            <person name="Schutz K."/>
            <person name="Huang E."/>
            <person name="Spiegel L."/>
            <person name="Sekhon M."/>
            <person name="Murray J."/>
            <person name="Sheet P."/>
            <person name="Cordes M."/>
            <person name="Abu-Threideh J."/>
            <person name="Stoneking T."/>
            <person name="Kalicki J."/>
            <person name="Graves T."/>
            <person name="Harmon G."/>
            <person name="Edwards J."/>
            <person name="Latreille P."/>
            <person name="Courtney L."/>
            <person name="Cloud J."/>
            <person name="Abbott A."/>
            <person name="Scott K."/>
            <person name="Johnson D."/>
            <person name="Minx P."/>
            <person name="Bentley D."/>
            <person name="Fulton B."/>
            <person name="Miller N."/>
            <person name="Greco T."/>
            <person name="Kemp K."/>
            <person name="Kramer J."/>
            <person name="Fulton L."/>
            <person name="Mardis E."/>
            <person name="Dante M."/>
            <person name="Pepin K."/>
            <person name="Hillier L.W."/>
            <person name="Nelson J."/>
            <person name="Spieth J."/>
            <person name="Ryan E."/>
            <person name="Andrews S."/>
            <person name="Geisel C."/>
            <person name="Layman D."/>
            <person name="Du H."/>
            <person name="Ali J."/>
            <person name="Berghoff A."/>
            <person name="Jones K."/>
            <person name="Drone K."/>
            <person name="Cotton M."/>
            <person name="Joshu C."/>
            <person name="Antonoiu B."/>
            <person name="Zidanic M."/>
            <person name="Strong C."/>
            <person name="Sun H."/>
            <person name="Lamar B."/>
            <person name="Yordan C."/>
            <person name="Ma P."/>
            <person name="Zhong J."/>
            <person name="Preston R."/>
            <person name="Vil D."/>
            <person name="Shekher M."/>
            <person name="Matero A."/>
            <person name="Shah R."/>
            <person name="Swaby I.K."/>
            <person name="O'Shaughnessy A."/>
            <person name="Rodriguez M."/>
            <person name="Hoffman J."/>
            <person name="Till S."/>
            <person name="Granat S."/>
            <person name="Shohdy N."/>
            <person name="Hasegawa A."/>
            <person name="Hameed A."/>
            <person name="Lodhi M."/>
            <person name="Johnson A."/>
            <person name="Chen E."/>
            <person name="Marra M.A."/>
            <person name="Martienssen R."/>
            <person name="McCombie W.R."/>
        </authorList>
    </citation>
    <scope>NUCLEOTIDE SEQUENCE [LARGE SCALE GENOMIC DNA]</scope>
    <source>
        <strain>cv. Columbia</strain>
    </source>
</reference>
<reference key="2">
    <citation type="journal article" date="2017" name="Plant J.">
        <title>Araport11: a complete reannotation of the Arabidopsis thaliana reference genome.</title>
        <authorList>
            <person name="Cheng C.Y."/>
            <person name="Krishnakumar V."/>
            <person name="Chan A.P."/>
            <person name="Thibaud-Nissen F."/>
            <person name="Schobel S."/>
            <person name="Town C.D."/>
        </authorList>
    </citation>
    <scope>GENOME REANNOTATION</scope>
    <source>
        <strain>cv. Columbia</strain>
    </source>
</reference>
<reference key="3">
    <citation type="journal article" date="2009" name="J. Proteomics">
        <title>Phosphoproteomic analysis of nuclei-enriched fractions from Arabidopsis thaliana.</title>
        <authorList>
            <person name="Jones A.M.E."/>
            <person name="MacLean D."/>
            <person name="Studholme D.J."/>
            <person name="Serna-Sanz A."/>
            <person name="Andreasson E."/>
            <person name="Rathjen J.P."/>
            <person name="Peck S.C."/>
        </authorList>
    </citation>
    <scope>PHOSPHORYLATION [LARGE SCALE ANALYSIS] AT THR-851</scope>
    <scope>IDENTIFICATION BY MASS SPECTROMETRY [LARGE SCALE ANALYSIS]</scope>
    <source>
        <strain>cv. Columbia</strain>
    </source>
</reference>
<reference key="4">
    <citation type="journal article" date="2014" name="Plant Cell">
        <title>AUTOPHAGY-RELATED11 plays a critical role in general autophagy- and senescence-induced mitophagy in Arabidopsis.</title>
        <authorList>
            <person name="Li F."/>
            <person name="Chung T."/>
            <person name="Vierstra R.D."/>
        </authorList>
    </citation>
    <scope>FUNCTION</scope>
    <scope>SUBUNIT</scope>
    <scope>INTERACTION WITH ATG8E; ATG13A AND ATG101</scope>
    <scope>SUBCELLULAR LOCATION</scope>
    <scope>AIM MOTIF</scope>
    <scope>DISRUPTION PHENOTYPE</scope>
</reference>
<organism>
    <name type="scientific">Arabidopsis thaliana</name>
    <name type="common">Mouse-ear cress</name>
    <dbReference type="NCBI Taxonomy" id="3702"/>
    <lineage>
        <taxon>Eukaryota</taxon>
        <taxon>Viridiplantae</taxon>
        <taxon>Streptophyta</taxon>
        <taxon>Embryophyta</taxon>
        <taxon>Tracheophyta</taxon>
        <taxon>Spermatophyta</taxon>
        <taxon>Magnoliopsida</taxon>
        <taxon>eudicotyledons</taxon>
        <taxon>Gunneridae</taxon>
        <taxon>Pentapetalae</taxon>
        <taxon>rosids</taxon>
        <taxon>malvids</taxon>
        <taxon>Brassicales</taxon>
        <taxon>Brassicaceae</taxon>
        <taxon>Camelineae</taxon>
        <taxon>Arabidopsis</taxon>
    </lineage>
</organism>
<feature type="chain" id="PRO_0000434625" description="Autophagy-related protein 11">
    <location>
        <begin position="1"/>
        <end position="1148"/>
    </location>
</feature>
<feature type="region of interest" description="Disordered" evidence="2">
    <location>
        <begin position="699"/>
        <end position="727"/>
    </location>
</feature>
<feature type="region of interest" description="Disordered" evidence="2">
    <location>
        <begin position="754"/>
        <end position="777"/>
    </location>
</feature>
<feature type="region of interest" description="Disordered" evidence="2">
    <location>
        <begin position="784"/>
        <end position="803"/>
    </location>
</feature>
<feature type="coiled-coil region" evidence="1">
    <location>
        <begin position="816"/>
        <end position="868"/>
    </location>
</feature>
<feature type="coiled-coil region" evidence="1">
    <location>
        <begin position="956"/>
        <end position="996"/>
    </location>
</feature>
<feature type="short sequence motif" description="AIM (Atg8-family-interacting motif)" evidence="6">
    <location>
        <begin position="567"/>
        <end position="570"/>
    </location>
</feature>
<feature type="short sequence motif" description="AIM (Atg8-family-interacting motif)" evidence="6">
    <location>
        <begin position="1130"/>
        <end position="1133"/>
    </location>
</feature>
<feature type="compositionally biased region" description="Basic and acidic residues" evidence="2">
    <location>
        <begin position="699"/>
        <end position="710"/>
    </location>
</feature>
<feature type="compositionally biased region" description="Polar residues" evidence="2">
    <location>
        <begin position="754"/>
        <end position="767"/>
    </location>
</feature>
<feature type="compositionally biased region" description="Polar residues" evidence="2">
    <location>
        <begin position="784"/>
        <end position="793"/>
    </location>
</feature>
<feature type="modified residue" description="Phosphothreonine" evidence="9">
    <location>
        <position position="851"/>
    </location>
</feature>
<accession>Q9SUG7</accession>
<keyword id="KW-0072">Autophagy</keyword>
<keyword id="KW-0175">Coiled coil</keyword>
<keyword id="KW-0968">Cytoplasmic vesicle</keyword>
<keyword id="KW-0597">Phosphoprotein</keyword>
<keyword id="KW-0653">Protein transport</keyword>
<keyword id="KW-1185">Reference proteome</keyword>
<keyword id="KW-0346">Stress response</keyword>
<keyword id="KW-0813">Transport</keyword>
<protein>
    <recommendedName>
        <fullName evidence="4">Autophagy-related protein 11</fullName>
    </recommendedName>
</protein>
<name>ATG11_ARATH</name>
<sequence length="1148" mass="129184">MSGSFTESFADDGKLLLCVAENGHSFEFQCSETTSVESVMRFVESVSGIALSDQLLLSLDMKLEPQKLLSAFGLPASDREVFVFNKAMLQSNSHPPSPEDVDLQDVADALPPASLHEHHPLDDASDPALKALPLYERQFRYHFHKGRTIYNCTVVKHENCERLTREQKVQQRAVEVATRNLEQYYRVIYQNFLEFMKRYKHQHRLHSDLLMNFGRDIEKLRSAKIHPYLQTESRKCLLDFVKEDNLKKAVENCASSHRQFENKIAQFQQMFVEVKRKVEELFACRASLSMKNLEVTVKDHERFIDEEKSIMQSLSKDVNTVKKLVDDCMSSQVSSSLRPHDAVSALGPMYEVHDKNHLPKMQACYNSISELLDFCKNKKNEMNNFVHGYMQKITYVTYIIKDAKLQFPVFREAMVRQDDLFADLKLVRGVGPAYRACLAEVVRRKASMKLYMGMAGQLAEKLAMKRETEVRKREEFLKTHGPFVPRDVLASMGLYDTPTQCDVNVAPYDTSLLNIEISDVDRYAPEFLVGLHSKIASLKSSLTMSGDSSLSAEPEEIGIDTFDKDNFDDILAASELIEIAGTSKMEVENAKLKADLASAISRICSLGPQFEYEVLDESEVENVLKNAADKTAEALQAKDEYEKHLLLMLKEKQMHCDSYEKRIRELEQRLSDEYLQGQRHNNKDVSGLNLMHEKVSEYKAEASSDVEGNKTHVSGSEPMDEVSCVSNLTSKQPCKAREGMDENMVDSSQVLSQPLDSSMLESQQNNEKGGKDSEAGEMGVFLSNSSTAESPQKSLDDNVATGRGLDAKDSGDIILELRNELMEKSNKLSEMESKLNGAMEEVSNLSRELETNQKLLEESQMNCAHLENCLHEAREEAQTHLCAADRRASQYTALRASAVKMRGLFERFRSSVCAGSGIADFADSLRTLAQALANSVNENEDDGTTEFRKCIRVLADKVSFLSKHREELLEKCQNLEATSEQTRKDLEEKKELVKTLYTKHQLGKQANKEKISFGRLEVHEIAAFVLNQAGHYEAINRNCPNYYLSSESEALFTDHLPSRPTYIVGQIVHIERQIVKLPSQLSASASPEAGKTHHLCSDQGSRTLASSSISTSTSATTTSNPYGLSSGCEYFIVTIAMLPDTAIHQQAS</sequence>
<evidence type="ECO:0000255" key="1"/>
<evidence type="ECO:0000256" key="2">
    <source>
        <dbReference type="SAM" id="MobiDB-lite"/>
    </source>
</evidence>
<evidence type="ECO:0000269" key="3">
    <source>
    </source>
</evidence>
<evidence type="ECO:0000303" key="4">
    <source>
    </source>
</evidence>
<evidence type="ECO:0000305" key="5"/>
<evidence type="ECO:0000305" key="6">
    <source>
    </source>
</evidence>
<evidence type="ECO:0000312" key="7">
    <source>
        <dbReference type="Araport" id="AT4G30790"/>
    </source>
</evidence>
<evidence type="ECO:0000312" key="8">
    <source>
        <dbReference type="EMBL" id="CAB52452.1"/>
    </source>
</evidence>
<evidence type="ECO:0007744" key="9">
    <source>
    </source>
</evidence>
<gene>
    <name evidence="4" type="primary">ATG11</name>
    <name evidence="7" type="ordered locus">At4g30790</name>
    <name evidence="8" type="ORF">T10C21.140</name>
</gene>
<dbReference type="EMBL" id="AL109787">
    <property type="protein sequence ID" value="CAB52452.1"/>
    <property type="molecule type" value="Genomic_DNA"/>
</dbReference>
<dbReference type="EMBL" id="AL161577">
    <property type="protein sequence ID" value="CAB79797.1"/>
    <property type="molecule type" value="Genomic_DNA"/>
</dbReference>
<dbReference type="EMBL" id="CP002687">
    <property type="protein sequence ID" value="AEE85809.1"/>
    <property type="molecule type" value="Genomic_DNA"/>
</dbReference>
<dbReference type="PIR" id="D85360">
    <property type="entry name" value="D85360"/>
</dbReference>
<dbReference type="RefSeq" id="NP_194808.1">
    <property type="nucleotide sequence ID" value="NM_119225.3"/>
</dbReference>
<dbReference type="SMR" id="Q9SUG7"/>
<dbReference type="FunCoup" id="Q9SUG7">
    <property type="interactions" value="494"/>
</dbReference>
<dbReference type="STRING" id="3702.Q9SUG7"/>
<dbReference type="iPTMnet" id="Q9SUG7"/>
<dbReference type="PaxDb" id="3702-AT4G30790.1"/>
<dbReference type="ProteomicsDB" id="246828"/>
<dbReference type="EnsemblPlants" id="AT4G30790.1">
    <property type="protein sequence ID" value="AT4G30790.1"/>
    <property type="gene ID" value="AT4G30790"/>
</dbReference>
<dbReference type="GeneID" id="829202"/>
<dbReference type="Gramene" id="AT4G30790.1">
    <property type="protein sequence ID" value="AT4G30790.1"/>
    <property type="gene ID" value="AT4G30790"/>
</dbReference>
<dbReference type="KEGG" id="ath:AT4G30790"/>
<dbReference type="Araport" id="AT4G30790"/>
<dbReference type="TAIR" id="AT4G30790">
    <property type="gene designation" value="ATG11"/>
</dbReference>
<dbReference type="eggNOG" id="ENOG502QUG9">
    <property type="taxonomic scope" value="Eukaryota"/>
</dbReference>
<dbReference type="HOGENOM" id="CLU_007054_0_0_1"/>
<dbReference type="InParanoid" id="Q9SUG7"/>
<dbReference type="OMA" id="GLRWYLI"/>
<dbReference type="OrthoDB" id="447953at2759"/>
<dbReference type="PhylomeDB" id="Q9SUG7"/>
<dbReference type="PRO" id="PR:Q9SUG7"/>
<dbReference type="Proteomes" id="UP000006548">
    <property type="component" value="Chromosome 4"/>
</dbReference>
<dbReference type="ExpressionAtlas" id="Q9SUG7">
    <property type="expression patterns" value="baseline and differential"/>
</dbReference>
<dbReference type="GO" id="GO:0005776">
    <property type="term" value="C:autophagosome"/>
    <property type="evidence" value="ECO:0000315"/>
    <property type="project" value="UniProtKB"/>
</dbReference>
<dbReference type="GO" id="GO:0031410">
    <property type="term" value="C:cytoplasmic vesicle"/>
    <property type="evidence" value="ECO:0007669"/>
    <property type="project" value="UniProtKB-KW"/>
</dbReference>
<dbReference type="GO" id="GO:0009506">
    <property type="term" value="C:plasmodesma"/>
    <property type="evidence" value="ECO:0007005"/>
    <property type="project" value="TAIR"/>
</dbReference>
<dbReference type="GO" id="GO:0042803">
    <property type="term" value="F:protein homodimerization activity"/>
    <property type="evidence" value="ECO:0000314"/>
    <property type="project" value="UniProtKB"/>
</dbReference>
<dbReference type="GO" id="GO:0000045">
    <property type="term" value="P:autophagosome assembly"/>
    <property type="evidence" value="ECO:0007669"/>
    <property type="project" value="InterPro"/>
</dbReference>
<dbReference type="GO" id="GO:0006914">
    <property type="term" value="P:autophagy"/>
    <property type="evidence" value="ECO:0000315"/>
    <property type="project" value="UniProtKB"/>
</dbReference>
<dbReference type="GO" id="GO:0000422">
    <property type="term" value="P:autophagy of mitochondrion"/>
    <property type="evidence" value="ECO:0000315"/>
    <property type="project" value="UniProtKB"/>
</dbReference>
<dbReference type="GO" id="GO:0010150">
    <property type="term" value="P:leaf senescence"/>
    <property type="evidence" value="ECO:0000315"/>
    <property type="project" value="UniProtKB"/>
</dbReference>
<dbReference type="GO" id="GO:0015031">
    <property type="term" value="P:protein transport"/>
    <property type="evidence" value="ECO:0007669"/>
    <property type="project" value="UniProtKB-KW"/>
</dbReference>
<dbReference type="InterPro" id="IPR040040">
    <property type="entry name" value="ATG11"/>
</dbReference>
<dbReference type="InterPro" id="IPR019460">
    <property type="entry name" value="Atg11_C"/>
</dbReference>
<dbReference type="InterPro" id="IPR045326">
    <property type="entry name" value="ATG17-like_dom"/>
</dbReference>
<dbReference type="InterPro" id="IPR029071">
    <property type="entry name" value="Ubiquitin-like_domsf"/>
</dbReference>
<dbReference type="PANTHER" id="PTHR13222">
    <property type="entry name" value="RB1-INDUCIBLE COILED-COIL"/>
    <property type="match status" value="1"/>
</dbReference>
<dbReference type="PANTHER" id="PTHR13222:SF1">
    <property type="entry name" value="RB1-INDUCIBLE COILED-COIL PROTEIN 1"/>
    <property type="match status" value="1"/>
</dbReference>
<dbReference type="Pfam" id="PF10377">
    <property type="entry name" value="ATG11"/>
    <property type="match status" value="1"/>
</dbReference>
<dbReference type="Pfam" id="PF04108">
    <property type="entry name" value="ATG17_like"/>
    <property type="match status" value="1"/>
</dbReference>
<dbReference type="SUPFAM" id="SSF54236">
    <property type="entry name" value="Ubiquitin-like"/>
    <property type="match status" value="1"/>
</dbReference>